<accession>Q6BIS2</accession>
<protein>
    <recommendedName>
        <fullName evidence="3">Endosomal/vacuolar adapter protein YPT35</fullName>
    </recommendedName>
    <alternativeName>
        <fullName evidence="3">PX domain-containing protein YPT35</fullName>
    </alternativeName>
</protein>
<gene>
    <name type="primary">YPT35</name>
    <name type="ordered locus">DEHA2G08074g</name>
</gene>
<organism>
    <name type="scientific">Debaryomyces hansenii (strain ATCC 36239 / CBS 767 / BCRC 21394 / JCM 1990 / NBRC 0083 / IGC 2968)</name>
    <name type="common">Yeast</name>
    <name type="synonym">Torulaspora hansenii</name>
    <dbReference type="NCBI Taxonomy" id="284592"/>
    <lineage>
        <taxon>Eukaryota</taxon>
        <taxon>Fungi</taxon>
        <taxon>Dikarya</taxon>
        <taxon>Ascomycota</taxon>
        <taxon>Saccharomycotina</taxon>
        <taxon>Pichiomycetes</taxon>
        <taxon>Debaryomycetaceae</taxon>
        <taxon>Debaryomyces</taxon>
    </lineage>
</organism>
<name>YPT35_DEBHA</name>
<proteinExistence type="inferred from homology"/>
<dbReference type="EMBL" id="CR382139">
    <property type="protein sequence ID" value="CAG90362.2"/>
    <property type="molecule type" value="Genomic_DNA"/>
</dbReference>
<dbReference type="RefSeq" id="XP_461899.2">
    <property type="nucleotide sequence ID" value="XM_461899.1"/>
</dbReference>
<dbReference type="SMR" id="Q6BIS2"/>
<dbReference type="FunCoup" id="Q6BIS2">
    <property type="interactions" value="86"/>
</dbReference>
<dbReference type="STRING" id="284592.Q6BIS2"/>
<dbReference type="GeneID" id="2904780"/>
<dbReference type="KEGG" id="dha:DEHA2G08074g"/>
<dbReference type="VEuPathDB" id="FungiDB:DEHA2G08074g"/>
<dbReference type="eggNOG" id="ENOG502S8A5">
    <property type="taxonomic scope" value="Eukaryota"/>
</dbReference>
<dbReference type="HOGENOM" id="CLU_070610_2_0_1"/>
<dbReference type="InParanoid" id="Q6BIS2"/>
<dbReference type="OMA" id="QWFMTNV"/>
<dbReference type="OrthoDB" id="10254720at2759"/>
<dbReference type="Proteomes" id="UP000000599">
    <property type="component" value="Chromosome G"/>
</dbReference>
<dbReference type="GO" id="GO:0010008">
    <property type="term" value="C:endosome membrane"/>
    <property type="evidence" value="ECO:0007669"/>
    <property type="project" value="UniProtKB-SubCell"/>
</dbReference>
<dbReference type="GO" id="GO:0005774">
    <property type="term" value="C:vacuolar membrane"/>
    <property type="evidence" value="ECO:0007669"/>
    <property type="project" value="UniProtKB-SubCell"/>
</dbReference>
<dbReference type="GO" id="GO:0032266">
    <property type="term" value="F:phosphatidylinositol-3-phosphate binding"/>
    <property type="evidence" value="ECO:0007669"/>
    <property type="project" value="InterPro"/>
</dbReference>
<dbReference type="GO" id="GO:0030674">
    <property type="term" value="F:protein-macromolecule adaptor activity"/>
    <property type="evidence" value="ECO:0000250"/>
    <property type="project" value="UniProtKB"/>
</dbReference>
<dbReference type="GO" id="GO:0072657">
    <property type="term" value="P:protein localization to membrane"/>
    <property type="evidence" value="ECO:0000250"/>
    <property type="project" value="UniProtKB"/>
</dbReference>
<dbReference type="CDD" id="cd07280">
    <property type="entry name" value="PX_YPT35"/>
    <property type="match status" value="1"/>
</dbReference>
<dbReference type="Gene3D" id="3.30.1520.10">
    <property type="entry name" value="Phox-like domain"/>
    <property type="match status" value="1"/>
</dbReference>
<dbReference type="InterPro" id="IPR001683">
    <property type="entry name" value="PX_dom"/>
</dbReference>
<dbReference type="InterPro" id="IPR036871">
    <property type="entry name" value="PX_dom_sf"/>
</dbReference>
<dbReference type="InterPro" id="IPR037917">
    <property type="entry name" value="Ypt35_PX"/>
</dbReference>
<dbReference type="PANTHER" id="PTHR10555:SF170">
    <property type="entry name" value="FI18122P1"/>
    <property type="match status" value="1"/>
</dbReference>
<dbReference type="PANTHER" id="PTHR10555">
    <property type="entry name" value="SORTING NEXIN"/>
    <property type="match status" value="1"/>
</dbReference>
<dbReference type="Pfam" id="PF00787">
    <property type="entry name" value="PX"/>
    <property type="match status" value="1"/>
</dbReference>
<dbReference type="SMART" id="SM00312">
    <property type="entry name" value="PX"/>
    <property type="match status" value="1"/>
</dbReference>
<dbReference type="SUPFAM" id="SSF64268">
    <property type="entry name" value="PX domain"/>
    <property type="match status" value="1"/>
</dbReference>
<dbReference type="PROSITE" id="PS50195">
    <property type="entry name" value="PX"/>
    <property type="match status" value="1"/>
</dbReference>
<comment type="function">
    <text evidence="1">Recruits the lipid transfer protein VPS13 to endosomal and vacuolar membranes.</text>
</comment>
<comment type="subcellular location">
    <subcellularLocation>
        <location evidence="1">Endosome membrane</location>
        <topology evidence="1">Peripheral membrane protein</topology>
    </subcellularLocation>
    <subcellularLocation>
        <location evidence="1">Vacuole membrane</location>
        <topology evidence="1">Peripheral membrane protein</topology>
    </subcellularLocation>
</comment>
<comment type="domain">
    <text evidence="1">The PX domain binds phosphatidylinositol 3-phosphate (PtdIns(3)P) which is necessary for peripheral membrane localization.</text>
</comment>
<comment type="similarity">
    <text evidence="3">Belongs to the YPT35 family.</text>
</comment>
<evidence type="ECO:0000250" key="1">
    <source>
        <dbReference type="UniProtKB" id="P38815"/>
    </source>
</evidence>
<evidence type="ECO:0000255" key="2">
    <source>
        <dbReference type="PROSITE-ProRule" id="PRU00147"/>
    </source>
</evidence>
<evidence type="ECO:0000305" key="3"/>
<reference key="1">
    <citation type="journal article" date="2004" name="Nature">
        <title>Genome evolution in yeasts.</title>
        <authorList>
            <person name="Dujon B."/>
            <person name="Sherman D."/>
            <person name="Fischer G."/>
            <person name="Durrens P."/>
            <person name="Casaregola S."/>
            <person name="Lafontaine I."/>
            <person name="de Montigny J."/>
            <person name="Marck C."/>
            <person name="Neuveglise C."/>
            <person name="Talla E."/>
            <person name="Goffard N."/>
            <person name="Frangeul L."/>
            <person name="Aigle M."/>
            <person name="Anthouard V."/>
            <person name="Babour A."/>
            <person name="Barbe V."/>
            <person name="Barnay S."/>
            <person name="Blanchin S."/>
            <person name="Beckerich J.-M."/>
            <person name="Beyne E."/>
            <person name="Bleykasten C."/>
            <person name="Boisrame A."/>
            <person name="Boyer J."/>
            <person name="Cattolico L."/>
            <person name="Confanioleri F."/>
            <person name="de Daruvar A."/>
            <person name="Despons L."/>
            <person name="Fabre E."/>
            <person name="Fairhead C."/>
            <person name="Ferry-Dumazet H."/>
            <person name="Groppi A."/>
            <person name="Hantraye F."/>
            <person name="Hennequin C."/>
            <person name="Jauniaux N."/>
            <person name="Joyet P."/>
            <person name="Kachouri R."/>
            <person name="Kerrest A."/>
            <person name="Koszul R."/>
            <person name="Lemaire M."/>
            <person name="Lesur I."/>
            <person name="Ma L."/>
            <person name="Muller H."/>
            <person name="Nicaud J.-M."/>
            <person name="Nikolski M."/>
            <person name="Oztas S."/>
            <person name="Ozier-Kalogeropoulos O."/>
            <person name="Pellenz S."/>
            <person name="Potier S."/>
            <person name="Richard G.-F."/>
            <person name="Straub M.-L."/>
            <person name="Suleau A."/>
            <person name="Swennen D."/>
            <person name="Tekaia F."/>
            <person name="Wesolowski-Louvel M."/>
            <person name="Westhof E."/>
            <person name="Wirth B."/>
            <person name="Zeniou-Meyer M."/>
            <person name="Zivanovic Y."/>
            <person name="Bolotin-Fukuhara M."/>
            <person name="Thierry A."/>
            <person name="Bouchier C."/>
            <person name="Caudron B."/>
            <person name="Scarpelli C."/>
            <person name="Gaillardin C."/>
            <person name="Weissenbach J."/>
            <person name="Wincker P."/>
            <person name="Souciet J.-L."/>
        </authorList>
    </citation>
    <scope>NUCLEOTIDE SEQUENCE [LARGE SCALE GENOMIC DNA]</scope>
    <source>
        <strain>ATCC 36239 / CBS 767 / BCRC 21394 / JCM 1990 / NBRC 0083 / IGC 2968</strain>
    </source>
</reference>
<sequence>MTASNRRGSTHRNSVTQLNKVLPVPIQLEDETSSGHFNSTSHITDVLVGDYHVIQGEGGSSYVVWSIRIIVDDSVYSSMVIYKRYSDIQRFREALLEHYPNTEIPPLPPKDNFSFQRLSMSDYWLENRRKGLQWFMTNVMLNPKHQHSPVITHFILN</sequence>
<feature type="chain" id="PRO_0000333494" description="Endosomal/vacuolar adapter protein YPT35">
    <location>
        <begin position="1"/>
        <end position="157"/>
    </location>
</feature>
<feature type="domain" description="PX" evidence="2">
    <location>
        <begin position="43"/>
        <end position="157"/>
    </location>
</feature>
<keyword id="KW-0967">Endosome</keyword>
<keyword id="KW-0472">Membrane</keyword>
<keyword id="KW-1185">Reference proteome</keyword>
<keyword id="KW-0926">Vacuole</keyword>